<sequence length="439" mass="50349">MLLSLLFLLSTFAFGALTQPVPAKSENNVQFLHSKNKKRFYDYSTELIRGVNIGGWLLLEPYITPSLFEAFRTDENSDAGIPVDEYHYCEALGSEVAESRLEAHWSTFYTEQDFKNIASAGLNMVRIPIGYWAFKTLDSDPYVTGKQESYLDKAIQWSKDAGLKVWVDLHGAPGSQNGFDNSGLRDHWSFLEDENLNLTKEVIKYLLEKYSREEYLDTVIGIELINEPLGPVLDMDKLKEYYQFGYDYLRNELGSDQIVVIHDAFEAYNYWDSTLTVEDGSWGVVVDHHHYQCFSSDQLARSIDEHVSVACEWGTGVLTESHWTVAGEWSAALTDCAKWINGVGYGARYDGSFTKDSESSYYIGSCENNEDVSTWSEERKSNNRKYVEAQLDAFELRGGWIFWCYKTETTVEWDLQRLMYSGLFPQPVTDRQYPNQCGF</sequence>
<name>EXG_LACK1</name>
<comment type="function">
    <text evidence="1">Beta-glucanases participate in the metabolism of beta-glucan, the main structural component of the cell wall. It could also function biosynthetically as a transglycosylase (By similarity).</text>
</comment>
<comment type="catalytic activity">
    <reaction>
        <text>Successive hydrolysis of beta-D-glucose units from the non-reducing ends of (1-&gt;3)-beta-D-glucans, releasing alpha-glucose.</text>
        <dbReference type="EC" id="3.2.1.58"/>
    </reaction>
</comment>
<comment type="subcellular location">
    <subcellularLocation>
        <location evidence="3">Secreted</location>
    </subcellularLocation>
</comment>
<comment type="similarity">
    <text evidence="3">Belongs to the glycosyl hydrolase 5 (cellulase A) family.</text>
</comment>
<protein>
    <recommendedName>
        <fullName>Glucan 1,3-beta-glucosidase</fullName>
        <ecNumber>3.2.1.58</ecNumber>
    </recommendedName>
    <alternativeName>
        <fullName>Exo-1,3-beta-glucanase</fullName>
    </alternativeName>
</protein>
<accession>Q875R9</accession>
<keyword id="KW-0961">Cell wall biogenesis/degradation</keyword>
<keyword id="KW-1015">Disulfide bond</keyword>
<keyword id="KW-0326">Glycosidase</keyword>
<keyword id="KW-0378">Hydrolase</keyword>
<keyword id="KW-0964">Secreted</keyword>
<keyword id="KW-0732">Signal</keyword>
<keyword id="KW-0865">Zymogen</keyword>
<gene>
    <name type="primary">EXG1</name>
</gene>
<feature type="signal peptide" evidence="2">
    <location>
        <begin position="1"/>
        <end position="18"/>
    </location>
</feature>
<feature type="chain" id="PRO_0000007891" description="Glucan 1,3-beta-glucosidase">
    <location>
        <begin position="19"/>
        <end position="439"/>
    </location>
</feature>
<feature type="active site" description="Proton donor" evidence="1">
    <location>
        <position position="227"/>
    </location>
</feature>
<feature type="active site" description="Nucleophile" evidence="1">
    <location>
        <position position="328"/>
    </location>
</feature>
<feature type="disulfide bond" evidence="1">
    <location>
        <begin position="311"/>
        <end position="437"/>
    </location>
</feature>
<feature type="disulfide bond" evidence="1">
    <location>
        <begin position="336"/>
        <end position="366"/>
    </location>
</feature>
<dbReference type="EC" id="3.2.1.58"/>
<dbReference type="EMBL" id="AY145000">
    <property type="protein sequence ID" value="AAO32563.1"/>
    <property type="molecule type" value="Genomic_DNA"/>
</dbReference>
<dbReference type="SMR" id="Q875R9"/>
<dbReference type="CAZy" id="GH5">
    <property type="family name" value="Glycoside Hydrolase Family 5"/>
</dbReference>
<dbReference type="GO" id="GO:0009986">
    <property type="term" value="C:cell surface"/>
    <property type="evidence" value="ECO:0007669"/>
    <property type="project" value="TreeGrafter"/>
</dbReference>
<dbReference type="GO" id="GO:0005576">
    <property type="term" value="C:extracellular region"/>
    <property type="evidence" value="ECO:0007669"/>
    <property type="project" value="UniProtKB-SubCell"/>
</dbReference>
<dbReference type="GO" id="GO:0004338">
    <property type="term" value="F:glucan exo-1,3-beta-glucosidase activity"/>
    <property type="evidence" value="ECO:0007669"/>
    <property type="project" value="UniProtKB-EC"/>
</dbReference>
<dbReference type="GO" id="GO:0071555">
    <property type="term" value="P:cell wall organization"/>
    <property type="evidence" value="ECO:0007669"/>
    <property type="project" value="UniProtKB-KW"/>
</dbReference>
<dbReference type="GO" id="GO:0009251">
    <property type="term" value="P:glucan catabolic process"/>
    <property type="evidence" value="ECO:0007669"/>
    <property type="project" value="TreeGrafter"/>
</dbReference>
<dbReference type="FunFam" id="3.20.20.80:FF:000033">
    <property type="entry name" value="Glucan 1,3-beta-glucosidase A"/>
    <property type="match status" value="1"/>
</dbReference>
<dbReference type="Gene3D" id="3.20.20.80">
    <property type="entry name" value="Glycosidases"/>
    <property type="match status" value="1"/>
</dbReference>
<dbReference type="InterPro" id="IPR001547">
    <property type="entry name" value="Glyco_hydro_5"/>
</dbReference>
<dbReference type="InterPro" id="IPR018087">
    <property type="entry name" value="Glyco_hydro_5_CS"/>
</dbReference>
<dbReference type="InterPro" id="IPR017853">
    <property type="entry name" value="Glycoside_hydrolase_SF"/>
</dbReference>
<dbReference type="InterPro" id="IPR050386">
    <property type="entry name" value="Glycosyl_hydrolase_5"/>
</dbReference>
<dbReference type="PANTHER" id="PTHR31297:SF1">
    <property type="entry name" value="GLUCAN 1,3-BETA-GLUCOSIDASE I_II-RELATED"/>
    <property type="match status" value="1"/>
</dbReference>
<dbReference type="PANTHER" id="PTHR31297">
    <property type="entry name" value="GLUCAN ENDO-1,6-BETA-GLUCOSIDASE B"/>
    <property type="match status" value="1"/>
</dbReference>
<dbReference type="Pfam" id="PF00150">
    <property type="entry name" value="Cellulase"/>
    <property type="match status" value="1"/>
</dbReference>
<dbReference type="SUPFAM" id="SSF51445">
    <property type="entry name" value="(Trans)glycosidases"/>
    <property type="match status" value="1"/>
</dbReference>
<dbReference type="PROSITE" id="PS00659">
    <property type="entry name" value="GLYCOSYL_HYDROL_F5"/>
    <property type="match status" value="1"/>
</dbReference>
<organism>
    <name type="scientific">Lachancea kluyveri (strain ATCC 58438 / CBS 3082 / BCRC 21498 / NBRC 1685 / JCM 7257 / NCYC 543 / NRRL Y-12651)</name>
    <name type="common">Yeast</name>
    <name type="synonym">Saccharomyces kluyveri</name>
    <dbReference type="NCBI Taxonomy" id="226302"/>
    <lineage>
        <taxon>Eukaryota</taxon>
        <taxon>Fungi</taxon>
        <taxon>Dikarya</taxon>
        <taxon>Ascomycota</taxon>
        <taxon>Saccharomycotina</taxon>
        <taxon>Saccharomycetes</taxon>
        <taxon>Saccharomycetales</taxon>
        <taxon>Saccharomycetaceae</taxon>
        <taxon>Lachancea</taxon>
    </lineage>
</organism>
<evidence type="ECO:0000250" key="1"/>
<evidence type="ECO:0000255" key="2"/>
<evidence type="ECO:0000305" key="3"/>
<reference key="1">
    <citation type="journal article" date="2003" name="Nature">
        <title>Yeast genome duplication was followed by asynchronous differentiation of duplicated genes.</title>
        <authorList>
            <person name="Langkjaer R.B."/>
            <person name="Cliften P.F."/>
            <person name="Johnston M."/>
            <person name="Piskur J."/>
        </authorList>
    </citation>
    <scope>NUCLEOTIDE SEQUENCE [GENOMIC DNA]</scope>
    <source>
        <strain>ATCC 58438 / CBS 3082 / BCRC 21498 / NBRC 1685 / JCM 7257 / NCYC 543 / NRRL Y-12651</strain>
    </source>
</reference>
<proteinExistence type="inferred from homology"/>